<accession>C5B0U8</accession>
<keyword id="KW-0378">Hydrolase</keyword>
<keyword id="KW-1185">Reference proteome</keyword>
<protein>
    <recommendedName>
        <fullName evidence="1">Ureidoacrylate amidohydrolase RutB</fullName>
        <ecNumber evidence="1">3.5.1.110</ecNumber>
    </recommendedName>
</protein>
<reference key="1">
    <citation type="journal article" date="2009" name="PLoS ONE">
        <title>Methylobacterium genome sequences: a reference blueprint to investigate microbial metabolism of C1 compounds from natural and industrial sources.</title>
        <authorList>
            <person name="Vuilleumier S."/>
            <person name="Chistoserdova L."/>
            <person name="Lee M.-C."/>
            <person name="Bringel F."/>
            <person name="Lajus A."/>
            <person name="Zhou Y."/>
            <person name="Gourion B."/>
            <person name="Barbe V."/>
            <person name="Chang J."/>
            <person name="Cruveiller S."/>
            <person name="Dossat C."/>
            <person name="Gillett W."/>
            <person name="Gruffaz C."/>
            <person name="Haugen E."/>
            <person name="Hourcade E."/>
            <person name="Levy R."/>
            <person name="Mangenot S."/>
            <person name="Muller E."/>
            <person name="Nadalig T."/>
            <person name="Pagni M."/>
            <person name="Penny C."/>
            <person name="Peyraud R."/>
            <person name="Robinson D.G."/>
            <person name="Roche D."/>
            <person name="Rouy Z."/>
            <person name="Saenampechek C."/>
            <person name="Salvignol G."/>
            <person name="Vallenet D."/>
            <person name="Wu Z."/>
            <person name="Marx C.J."/>
            <person name="Vorholt J.A."/>
            <person name="Olson M.V."/>
            <person name="Kaul R."/>
            <person name="Weissenbach J."/>
            <person name="Medigue C."/>
            <person name="Lidstrom M.E."/>
        </authorList>
    </citation>
    <scope>NUCLEOTIDE SEQUENCE [LARGE SCALE GENOMIC DNA]</scope>
    <source>
        <strain>ATCC 14718 / DSM 1338 / JCM 2805 / NCIMB 9133 / AM1</strain>
    </source>
</reference>
<gene>
    <name evidence="1" type="primary">rutB</name>
    <name type="ordered locus">MexAM1_META1p1663</name>
</gene>
<dbReference type="EC" id="3.5.1.110" evidence="1"/>
<dbReference type="EMBL" id="CP001510">
    <property type="protein sequence ID" value="ACS39512.1"/>
    <property type="molecule type" value="Genomic_DNA"/>
</dbReference>
<dbReference type="RefSeq" id="WP_012752595.1">
    <property type="nucleotide sequence ID" value="NC_012808.1"/>
</dbReference>
<dbReference type="SMR" id="C5B0U8"/>
<dbReference type="STRING" id="272630.MexAM1_META1p1663"/>
<dbReference type="KEGG" id="mea:Mex_1p1663"/>
<dbReference type="eggNOG" id="COG1335">
    <property type="taxonomic scope" value="Bacteria"/>
</dbReference>
<dbReference type="HOGENOM" id="CLU_068979_8_0_5"/>
<dbReference type="OrthoDB" id="9807387at2"/>
<dbReference type="Proteomes" id="UP000009081">
    <property type="component" value="Chromosome"/>
</dbReference>
<dbReference type="GO" id="GO:0016811">
    <property type="term" value="F:hydrolase activity, acting on carbon-nitrogen (but not peptide) bonds, in linear amides"/>
    <property type="evidence" value="ECO:0007669"/>
    <property type="project" value="UniProtKB-UniRule"/>
</dbReference>
<dbReference type="GO" id="GO:0019740">
    <property type="term" value="P:nitrogen utilization"/>
    <property type="evidence" value="ECO:0007669"/>
    <property type="project" value="UniProtKB-UniRule"/>
</dbReference>
<dbReference type="GO" id="GO:0006212">
    <property type="term" value="P:uracil catabolic process"/>
    <property type="evidence" value="ECO:0007669"/>
    <property type="project" value="UniProtKB-UniRule"/>
</dbReference>
<dbReference type="CDD" id="cd00431">
    <property type="entry name" value="cysteine_hydrolases"/>
    <property type="match status" value="1"/>
</dbReference>
<dbReference type="Gene3D" id="3.40.50.850">
    <property type="entry name" value="Isochorismatase-like"/>
    <property type="match status" value="1"/>
</dbReference>
<dbReference type="HAMAP" id="MF_00830">
    <property type="entry name" value="RutB"/>
    <property type="match status" value="1"/>
</dbReference>
<dbReference type="InterPro" id="IPR000868">
    <property type="entry name" value="Isochorismatase-like_dom"/>
</dbReference>
<dbReference type="InterPro" id="IPR050272">
    <property type="entry name" value="Isochorismatase-like_hydrls"/>
</dbReference>
<dbReference type="InterPro" id="IPR036380">
    <property type="entry name" value="Isochorismatase-like_sf"/>
</dbReference>
<dbReference type="InterPro" id="IPR019916">
    <property type="entry name" value="RutB"/>
</dbReference>
<dbReference type="NCBIfam" id="TIGR03614">
    <property type="entry name" value="RutB"/>
    <property type="match status" value="1"/>
</dbReference>
<dbReference type="PANTHER" id="PTHR43540:SF6">
    <property type="entry name" value="ISOCHORISMATASE-LIKE DOMAIN-CONTAINING PROTEIN"/>
    <property type="match status" value="1"/>
</dbReference>
<dbReference type="PANTHER" id="PTHR43540">
    <property type="entry name" value="PEROXYUREIDOACRYLATE/UREIDOACRYLATE AMIDOHYDROLASE-RELATED"/>
    <property type="match status" value="1"/>
</dbReference>
<dbReference type="Pfam" id="PF00857">
    <property type="entry name" value="Isochorismatase"/>
    <property type="match status" value="1"/>
</dbReference>
<dbReference type="SUPFAM" id="SSF52499">
    <property type="entry name" value="Isochorismatase-like hydrolases"/>
    <property type="match status" value="1"/>
</dbReference>
<sequence>MDADAPAGYRDPSGRHGAVTLPARPEPVAFDADATVLIVVDMQNAYATKGGYLDLAGFDVSATGPVIERIARAVAAARAAGIRVVWFQNGWDPDYVEAGGPGSPNWHKSNALKTMRLRPQMNQRLLAKGTWDYALVDALTPEPGDIVLPKPRYSGFYNTPLDSMLRARGIRTLVFTGIATNVCVESTLRDGYHREYFGIVLADATHQAGPPALQEGALRNIETFFGWVSDVAAFEAALSSDEARRIPA</sequence>
<feature type="chain" id="PRO_0000402692" description="Ureidoacrylate amidohydrolase RutB">
    <location>
        <begin position="1"/>
        <end position="248"/>
    </location>
</feature>
<feature type="active site" description="Proton acceptor" evidence="1">
    <location>
        <position position="41"/>
    </location>
</feature>
<feature type="active site" evidence="1">
    <location>
        <position position="150"/>
    </location>
</feature>
<feature type="active site" description="Nucleophile" evidence="1">
    <location>
        <position position="183"/>
    </location>
</feature>
<evidence type="ECO:0000255" key="1">
    <source>
        <dbReference type="HAMAP-Rule" id="MF_00830"/>
    </source>
</evidence>
<name>RUTB_METEA</name>
<comment type="function">
    <text evidence="1">Hydrolyzes ureidoacrylate to form aminoacrylate and carbamate. The carbamate hydrolyzes spontaneously, thereby releasing one of the nitrogen atoms of the pyrimidine ring as ammonia and one of its carbon atoms as CO2.</text>
</comment>
<comment type="catalytic activity">
    <reaction evidence="1">
        <text>(Z)-3-ureidoacrylate + H2O + H(+) = (Z)-3-aminoacrylate + NH4(+) + CO2</text>
        <dbReference type="Rhea" id="RHEA:42624"/>
        <dbReference type="ChEBI" id="CHEBI:15377"/>
        <dbReference type="ChEBI" id="CHEBI:15378"/>
        <dbReference type="ChEBI" id="CHEBI:16526"/>
        <dbReference type="ChEBI" id="CHEBI:28938"/>
        <dbReference type="ChEBI" id="CHEBI:59891"/>
        <dbReference type="ChEBI" id="CHEBI:59894"/>
        <dbReference type="EC" id="3.5.1.110"/>
    </reaction>
</comment>
<comment type="catalytic activity">
    <reaction evidence="1">
        <text>(Z)-3-ureidoacrylate + H2O = (Z)-3-aminoacrylate + carbamate + H(+)</text>
        <dbReference type="Rhea" id="RHEA:31603"/>
        <dbReference type="ChEBI" id="CHEBI:13941"/>
        <dbReference type="ChEBI" id="CHEBI:15377"/>
        <dbReference type="ChEBI" id="CHEBI:15378"/>
        <dbReference type="ChEBI" id="CHEBI:59891"/>
        <dbReference type="ChEBI" id="CHEBI:59894"/>
    </reaction>
</comment>
<comment type="catalytic activity">
    <reaction evidence="1">
        <text>(Z)-2-methylureidoacrylate + H2O + H(+) = (Z)-2-methylaminoacrylate + NH4(+) + CO2</text>
        <dbReference type="Rhea" id="RHEA:42620"/>
        <dbReference type="ChEBI" id="CHEBI:15377"/>
        <dbReference type="ChEBI" id="CHEBI:15378"/>
        <dbReference type="ChEBI" id="CHEBI:16526"/>
        <dbReference type="ChEBI" id="CHEBI:28938"/>
        <dbReference type="ChEBI" id="CHEBI:143783"/>
        <dbReference type="ChEBI" id="CHEBI:145735"/>
        <dbReference type="EC" id="3.5.1.110"/>
    </reaction>
</comment>
<comment type="similarity">
    <text evidence="1">Belongs to the isochorismatase family. RutB subfamily.</text>
</comment>
<proteinExistence type="inferred from homology"/>
<organism>
    <name type="scientific">Methylorubrum extorquens (strain ATCC 14718 / DSM 1338 / JCM 2805 / NCIMB 9133 / AM1)</name>
    <name type="common">Methylobacterium extorquens</name>
    <dbReference type="NCBI Taxonomy" id="272630"/>
    <lineage>
        <taxon>Bacteria</taxon>
        <taxon>Pseudomonadati</taxon>
        <taxon>Pseudomonadota</taxon>
        <taxon>Alphaproteobacteria</taxon>
        <taxon>Hyphomicrobiales</taxon>
        <taxon>Methylobacteriaceae</taxon>
        <taxon>Methylorubrum</taxon>
    </lineage>
</organism>